<keyword id="KW-0169">Cobalamin biosynthesis</keyword>
<keyword id="KW-0489">Methyltransferase</keyword>
<keyword id="KW-0949">S-adenosyl-L-methionine</keyword>
<keyword id="KW-0808">Transferase</keyword>
<sequence length="359" mass="39270">MLDLYVNCDGKKLRCGYTTGSCAAAAAKAAAITLFYNKKLEEINIDTPKGIELTIPIEKIVVDDNFVECAVIKDGGDDVDITHGIEIWARAEKKSSGYALKGGKGVGVVCGEGLYVPKGEPAINPVPRSMIEKEVRSVISKDSGVEITIFVPKGEEIAKKTFNPRLNIIGGISILGTTGIVMPMSEDALKASIELEINQKTCHGEKELILLFGNMGEKMAKELNLKENNMVIMSNYVGFALNCCMARKLEKVTIVGHIGKISKIASGCFNTHSRICDTRLETLALELALMGYDKDLVTKIYNQKTTEGAVNLLGEGYEKLYKNLGKKIIRKIEQYTYDSIKADVVMYSMGRGILYSSIE</sequence>
<name>CBID_CLOB6</name>
<evidence type="ECO:0000255" key="1">
    <source>
        <dbReference type="HAMAP-Rule" id="MF_00787"/>
    </source>
</evidence>
<reference key="1">
    <citation type="submission" date="2008-05" db="EMBL/GenBank/DDBJ databases">
        <title>Genome sequence of Clostridium botulinum Ba4 strain 657.</title>
        <authorList>
            <person name="Shrivastava S."/>
            <person name="Brown J.L."/>
            <person name="Bruce D."/>
            <person name="Detter C."/>
            <person name="Munk C."/>
            <person name="Smith L.A."/>
            <person name="Smith T.J."/>
            <person name="Sutton G."/>
            <person name="Brettin T.S."/>
        </authorList>
    </citation>
    <scope>NUCLEOTIDE SEQUENCE [LARGE SCALE GENOMIC DNA]</scope>
    <source>
        <strain>657 / Type Ba4</strain>
    </source>
</reference>
<protein>
    <recommendedName>
        <fullName evidence="1">Cobalt-precorrin-5B C(1)-methyltransferase</fullName>
        <ecNumber evidence="1">2.1.1.195</ecNumber>
    </recommendedName>
    <alternativeName>
        <fullName evidence="1">Cobalt-precorrin-6A synthase</fullName>
    </alternativeName>
</protein>
<gene>
    <name evidence="1" type="primary">cbiD</name>
    <name type="ordered locus">CLJ_B0986</name>
</gene>
<organism>
    <name type="scientific">Clostridium botulinum (strain 657 / Type Ba4)</name>
    <dbReference type="NCBI Taxonomy" id="515621"/>
    <lineage>
        <taxon>Bacteria</taxon>
        <taxon>Bacillati</taxon>
        <taxon>Bacillota</taxon>
        <taxon>Clostridia</taxon>
        <taxon>Eubacteriales</taxon>
        <taxon>Clostridiaceae</taxon>
        <taxon>Clostridium</taxon>
    </lineage>
</organism>
<accession>C3L308</accession>
<dbReference type="EC" id="2.1.1.195" evidence="1"/>
<dbReference type="EMBL" id="CP001083">
    <property type="protein sequence ID" value="ACQ52459.1"/>
    <property type="molecule type" value="Genomic_DNA"/>
</dbReference>
<dbReference type="RefSeq" id="WP_003360895.1">
    <property type="nucleotide sequence ID" value="NC_012658.1"/>
</dbReference>
<dbReference type="SMR" id="C3L308"/>
<dbReference type="KEGG" id="cbi:CLJ_B0986"/>
<dbReference type="HOGENOM" id="CLU_041273_1_0_9"/>
<dbReference type="UniPathway" id="UPA00148">
    <property type="reaction ID" value="UER00227"/>
</dbReference>
<dbReference type="Proteomes" id="UP000002333">
    <property type="component" value="Chromosome"/>
</dbReference>
<dbReference type="GO" id="GO:0043780">
    <property type="term" value="F:cobalt-precorrin-5B C1-methyltransferase activity"/>
    <property type="evidence" value="ECO:0007669"/>
    <property type="project" value="RHEA"/>
</dbReference>
<dbReference type="GO" id="GO:0019251">
    <property type="term" value="P:anaerobic cobalamin biosynthetic process"/>
    <property type="evidence" value="ECO:0007669"/>
    <property type="project" value="UniProtKB-UniRule"/>
</dbReference>
<dbReference type="GO" id="GO:0032259">
    <property type="term" value="P:methylation"/>
    <property type="evidence" value="ECO:0007669"/>
    <property type="project" value="UniProtKB-KW"/>
</dbReference>
<dbReference type="Gene3D" id="3.30.2110.10">
    <property type="entry name" value="CbiD-like"/>
    <property type="match status" value="1"/>
</dbReference>
<dbReference type="HAMAP" id="MF_00787">
    <property type="entry name" value="CbiD"/>
    <property type="match status" value="1"/>
</dbReference>
<dbReference type="InterPro" id="IPR002748">
    <property type="entry name" value="CbiD"/>
</dbReference>
<dbReference type="InterPro" id="IPR036074">
    <property type="entry name" value="CbiD_sf"/>
</dbReference>
<dbReference type="NCBIfam" id="TIGR00312">
    <property type="entry name" value="cbiD"/>
    <property type="match status" value="1"/>
</dbReference>
<dbReference type="PANTHER" id="PTHR35863">
    <property type="entry name" value="COBALT-PRECORRIN-5B C(1)-METHYLTRANSFERASE"/>
    <property type="match status" value="1"/>
</dbReference>
<dbReference type="PANTHER" id="PTHR35863:SF1">
    <property type="entry name" value="COBALT-PRECORRIN-5B C(1)-METHYLTRANSFERASE"/>
    <property type="match status" value="1"/>
</dbReference>
<dbReference type="Pfam" id="PF01888">
    <property type="entry name" value="CbiD"/>
    <property type="match status" value="1"/>
</dbReference>
<dbReference type="PIRSF" id="PIRSF026782">
    <property type="entry name" value="CbiD"/>
    <property type="match status" value="1"/>
</dbReference>
<dbReference type="SUPFAM" id="SSF111342">
    <property type="entry name" value="CbiD-like"/>
    <property type="match status" value="1"/>
</dbReference>
<proteinExistence type="inferred from homology"/>
<comment type="function">
    <text evidence="1">Catalyzes the methylation of C-1 in cobalt-precorrin-5B to form cobalt-precorrin-6A.</text>
</comment>
<comment type="catalytic activity">
    <reaction evidence="1">
        <text>Co-precorrin-5B + S-adenosyl-L-methionine = Co-precorrin-6A + S-adenosyl-L-homocysteine</text>
        <dbReference type="Rhea" id="RHEA:26285"/>
        <dbReference type="ChEBI" id="CHEBI:57856"/>
        <dbReference type="ChEBI" id="CHEBI:59789"/>
        <dbReference type="ChEBI" id="CHEBI:60063"/>
        <dbReference type="ChEBI" id="CHEBI:60064"/>
        <dbReference type="EC" id="2.1.1.195"/>
    </reaction>
</comment>
<comment type="pathway">
    <text evidence="1">Cofactor biosynthesis; adenosylcobalamin biosynthesis; cob(II)yrinate a,c-diamide from sirohydrochlorin (anaerobic route): step 6/10.</text>
</comment>
<comment type="similarity">
    <text evidence="1">Belongs to the CbiD family.</text>
</comment>
<feature type="chain" id="PRO_1000212935" description="Cobalt-precorrin-5B C(1)-methyltransferase">
    <location>
        <begin position="1"/>
        <end position="359"/>
    </location>
</feature>